<protein>
    <recommendedName>
        <fullName evidence="1">UPF0398 protein SGO_0588</fullName>
    </recommendedName>
</protein>
<name>Y588_STRGC</name>
<dbReference type="EMBL" id="CP000725">
    <property type="protein sequence ID" value="ABV09401.1"/>
    <property type="molecule type" value="Genomic_DNA"/>
</dbReference>
<dbReference type="RefSeq" id="WP_012000084.1">
    <property type="nucleotide sequence ID" value="NC_009785.1"/>
</dbReference>
<dbReference type="SMR" id="A8AVU4"/>
<dbReference type="STRING" id="467705.SGO_0588"/>
<dbReference type="KEGG" id="sgo:SGO_0588"/>
<dbReference type="eggNOG" id="COG4474">
    <property type="taxonomic scope" value="Bacteria"/>
</dbReference>
<dbReference type="HOGENOM" id="CLU_105319_0_0_9"/>
<dbReference type="Proteomes" id="UP000001131">
    <property type="component" value="Chromosome"/>
</dbReference>
<dbReference type="Gene3D" id="3.40.50.450">
    <property type="match status" value="1"/>
</dbReference>
<dbReference type="HAMAP" id="MF_01575">
    <property type="entry name" value="UPF0398"/>
    <property type="match status" value="1"/>
</dbReference>
<dbReference type="InterPro" id="IPR010697">
    <property type="entry name" value="YspA"/>
</dbReference>
<dbReference type="NCBIfam" id="NF010181">
    <property type="entry name" value="PRK13660.1"/>
    <property type="match status" value="1"/>
</dbReference>
<dbReference type="PANTHER" id="PTHR38440:SF1">
    <property type="entry name" value="UPF0398 PROTEIN SPR0331"/>
    <property type="match status" value="1"/>
</dbReference>
<dbReference type="PANTHER" id="PTHR38440">
    <property type="entry name" value="UPF0398 PROTEIN YPSA"/>
    <property type="match status" value="1"/>
</dbReference>
<dbReference type="Pfam" id="PF06908">
    <property type="entry name" value="YpsA"/>
    <property type="match status" value="1"/>
</dbReference>
<dbReference type="PIRSF" id="PIRSF021290">
    <property type="entry name" value="DUF1273"/>
    <property type="match status" value="1"/>
</dbReference>
<dbReference type="SUPFAM" id="SSF102405">
    <property type="entry name" value="MCP/YpsA-like"/>
    <property type="match status" value="1"/>
</dbReference>
<evidence type="ECO:0000255" key="1">
    <source>
        <dbReference type="HAMAP-Rule" id="MF_01575"/>
    </source>
</evidence>
<organism>
    <name type="scientific">Streptococcus gordonii (strain Challis / ATCC 35105 / BCRC 15272 / CH1 / DL1 / V288)</name>
    <dbReference type="NCBI Taxonomy" id="467705"/>
    <lineage>
        <taxon>Bacteria</taxon>
        <taxon>Bacillati</taxon>
        <taxon>Bacillota</taxon>
        <taxon>Bacilli</taxon>
        <taxon>Lactobacillales</taxon>
        <taxon>Streptococcaceae</taxon>
        <taxon>Streptococcus</taxon>
    </lineage>
</organism>
<accession>A8AVU4</accession>
<keyword id="KW-1185">Reference proteome</keyword>
<comment type="similarity">
    <text evidence="1">Belongs to the UPF0398 family.</text>
</comment>
<reference key="1">
    <citation type="journal article" date="2007" name="J. Bacteriol.">
        <title>Genome-wide transcriptional changes in Streptococcus gordonii in response to competence signaling peptide.</title>
        <authorList>
            <person name="Vickerman M.M."/>
            <person name="Iobst S."/>
            <person name="Jesionowski A.M."/>
            <person name="Gill S.R."/>
        </authorList>
    </citation>
    <scope>NUCLEOTIDE SEQUENCE [LARGE SCALE GENOMIC DNA]</scope>
    <source>
        <strain>Challis / ATCC 35105 / BCRC 15272 / CH1 / DL1 / V288</strain>
    </source>
</reference>
<proteinExistence type="inferred from homology"/>
<gene>
    <name type="ordered locus">SGO_0588</name>
</gene>
<feature type="chain" id="PRO_1000087887" description="UPF0398 protein SGO_0588">
    <location>
        <begin position="1"/>
        <end position="175"/>
    </location>
</feature>
<sequence>MVSVLVVGYKAFDLGIFGDKDQRLKIIKAAIRRDLIYLLENGMKWLVFTGNLGFEVWVLEVAKELQEEYNFQLATIFIFENQGENWNEANQEKLANFKNVDFIKYAYPSYENPSQFRTYNQFLLESTDGAYLFYDEENETKLKYLYRMMKENKQYHIKKLTFDDLNEMAENFSEI</sequence>